<accession>Q8WWL7</accession>
<accession>B1AQI5</accession>
<accession>B1AQI6</accession>
<accession>Q96SB5</accession>
<accession>Q96SB6</accession>
<accession>Q96SB7</accession>
<accession>Q9NT38</accession>
<feature type="chain" id="PRO_0000080373" description="G2/mitotic-specific cyclin-B3">
    <location>
        <begin position="1"/>
        <end position="1395"/>
    </location>
</feature>
<feature type="region of interest" description="Disordered" evidence="2">
    <location>
        <begin position="1"/>
        <end position="59"/>
    </location>
</feature>
<feature type="region of interest" description="Disordered" evidence="2">
    <location>
        <begin position="418"/>
        <end position="464"/>
    </location>
</feature>
<feature type="region of interest" description="Disordered" evidence="2">
    <location>
        <begin position="1074"/>
        <end position="1122"/>
    </location>
</feature>
<feature type="short sequence motif" description="D-box">
    <location>
        <begin position="60"/>
        <end position="68"/>
    </location>
</feature>
<feature type="compositionally biased region" description="Low complexity" evidence="2">
    <location>
        <begin position="10"/>
        <end position="23"/>
    </location>
</feature>
<feature type="compositionally biased region" description="Basic and acidic residues" evidence="2">
    <location>
        <begin position="25"/>
        <end position="34"/>
    </location>
</feature>
<feature type="compositionally biased region" description="Low complexity" evidence="2">
    <location>
        <begin position="42"/>
        <end position="54"/>
    </location>
</feature>
<feature type="compositionally biased region" description="Basic and acidic residues" evidence="2">
    <location>
        <begin position="419"/>
        <end position="431"/>
    </location>
</feature>
<feature type="compositionally biased region" description="Low complexity" evidence="2">
    <location>
        <begin position="1082"/>
        <end position="1093"/>
    </location>
</feature>
<feature type="splice variant" id="VSP_010514" description="In isoform 2." evidence="6">
    <location>
        <begin position="69"/>
        <end position="1172"/>
    </location>
</feature>
<feature type="splice variant" id="VSP_010515" description="In isoform 3." evidence="6">
    <location>
        <begin position="112"/>
        <end position="1395"/>
    </location>
</feature>
<feature type="sequence variant" id="VAR_036580" description="In a colorectal cancer sample; somatic mutation." evidence="5">
    <original>K</original>
    <variation>T</variation>
    <location>
        <position position="597"/>
    </location>
</feature>
<feature type="sequence variant" id="VAR_047027" description="In dbSNP:rs6614336.">
    <original>G</original>
    <variation>R</variation>
    <location>
        <position position="1001"/>
    </location>
</feature>
<feature type="mutagenesis site" description="In cycB3XA; prevents its destruction after completion of anaphase; when associated with A-63 and A-68.">
    <original>R</original>
    <variation>A</variation>
    <location>
        <position position="60"/>
    </location>
</feature>
<feature type="mutagenesis site" description="In cycB3XA; prevents its destruction after completion of anaphase; when associated with A-60 and A-68.">
    <original>F</original>
    <variation>A</variation>
    <location>
        <position position="63"/>
    </location>
</feature>
<feature type="mutagenesis site" description="In cycB3XA; prevents its destruction after completion of anaphase; when associated with A-60 and A-63.">
    <original>N</original>
    <variation>A</variation>
    <location>
        <position position="68"/>
    </location>
</feature>
<feature type="sequence conflict" description="In Ref. 2; CAC40024." evidence="7" ref="2">
    <original>K</original>
    <variation>R</variation>
    <location>
        <position position="295"/>
    </location>
</feature>
<feature type="sequence conflict" description="In Ref. 1; CAC94915." evidence="7" ref="1">
    <original>S</original>
    <variation>F</variation>
    <location>
        <position position="331"/>
    </location>
</feature>
<feature type="sequence conflict" description="In Ref. 2; CAC40024." evidence="7" ref="2">
    <original>S</original>
    <variation>P</variation>
    <location>
        <position position="396"/>
    </location>
</feature>
<feature type="sequence conflict" description="In Ref. 2; CAC40024." evidence="7" ref="2">
    <original>R</original>
    <variation>K</variation>
    <location>
        <position position="493"/>
    </location>
</feature>
<feature type="sequence conflict" description="In Ref. 2; CAC40024." evidence="7" ref="2">
    <original>N</original>
    <variation>S</variation>
    <location>
        <position position="573"/>
    </location>
</feature>
<feature type="sequence conflict" description="In Ref. 2; CAC40024." evidence="7" ref="2">
    <original>K</original>
    <variation>E</variation>
    <location>
        <position position="597"/>
    </location>
</feature>
<feature type="sequence conflict" description="In Ref. 1; CAC94915." evidence="7" ref="1">
    <original>E</original>
    <variation>K</variation>
    <location>
        <position position="774"/>
    </location>
</feature>
<dbReference type="EMBL" id="AJ416458">
    <property type="protein sequence ID" value="CAC94915.1"/>
    <property type="molecule type" value="mRNA"/>
</dbReference>
<dbReference type="EMBL" id="AJ314764">
    <property type="protein sequence ID" value="CAC40024.1"/>
    <property type="molecule type" value="mRNA"/>
</dbReference>
<dbReference type="EMBL" id="AJ314765">
    <property type="protein sequence ID" value="CAC40025.1"/>
    <property type="molecule type" value="mRNA"/>
</dbReference>
<dbReference type="EMBL" id="AJ314766">
    <property type="protein sequence ID" value="CAC40026.1"/>
    <property type="molecule type" value="mRNA"/>
</dbReference>
<dbReference type="EMBL" id="AL591367">
    <property type="status" value="NOT_ANNOTATED_CDS"/>
    <property type="molecule type" value="Genomic_DNA"/>
</dbReference>
<dbReference type="EMBL" id="BX323840">
    <property type="status" value="NOT_ANNOTATED_CDS"/>
    <property type="molecule type" value="Genomic_DNA"/>
</dbReference>
<dbReference type="EMBL" id="CH471180">
    <property type="protein sequence ID" value="EAW89922.1"/>
    <property type="molecule type" value="Genomic_DNA"/>
</dbReference>
<dbReference type="EMBL" id="CH471180">
    <property type="protein sequence ID" value="EAW89923.1"/>
    <property type="molecule type" value="Genomic_DNA"/>
</dbReference>
<dbReference type="EMBL" id="AL137550">
    <property type="protein sequence ID" value="CAB70806.1"/>
    <property type="molecule type" value="mRNA"/>
</dbReference>
<dbReference type="CCDS" id="CCDS14331.1">
    <molecule id="Q8WWL7-1"/>
</dbReference>
<dbReference type="CCDS" id="CCDS14332.1">
    <molecule id="Q8WWL7-2"/>
</dbReference>
<dbReference type="PIR" id="T46391">
    <property type="entry name" value="T46391"/>
</dbReference>
<dbReference type="RefSeq" id="NP_149020.2">
    <molecule id="Q8WWL7-1"/>
    <property type="nucleotide sequence ID" value="NM_033031.3"/>
</dbReference>
<dbReference type="RefSeq" id="NP_391990.1">
    <molecule id="Q8WWL7-2"/>
    <property type="nucleotide sequence ID" value="NM_033670.4"/>
</dbReference>
<dbReference type="RefSeq" id="XP_016885407.1">
    <property type="nucleotide sequence ID" value="XM_017029918.1"/>
</dbReference>
<dbReference type="RefSeq" id="XP_047298556.1">
    <molecule id="Q8WWL7-1"/>
    <property type="nucleotide sequence ID" value="XM_047442600.1"/>
</dbReference>
<dbReference type="RefSeq" id="XP_054184002.1">
    <molecule id="Q8WWL7-1"/>
    <property type="nucleotide sequence ID" value="XM_054328027.1"/>
</dbReference>
<dbReference type="SMR" id="Q8WWL7"/>
<dbReference type="BioGRID" id="124523">
    <property type="interactions" value="13"/>
</dbReference>
<dbReference type="ComplexPortal" id="CPX-2009">
    <property type="entry name" value="Cyclin B3-CDK2 complex"/>
</dbReference>
<dbReference type="FunCoup" id="Q8WWL7">
    <property type="interactions" value="540"/>
</dbReference>
<dbReference type="IntAct" id="Q8WWL7">
    <property type="interactions" value="7"/>
</dbReference>
<dbReference type="MINT" id="Q8WWL7"/>
<dbReference type="STRING" id="9606.ENSP00000365210"/>
<dbReference type="BindingDB" id="Q8WWL7"/>
<dbReference type="ChEMBL" id="CHEMBL2094127"/>
<dbReference type="DrugCentral" id="Q8WWL7"/>
<dbReference type="GlyGen" id="Q8WWL7">
    <property type="glycosylation" value="1 site, 1 O-linked glycan (1 site)"/>
</dbReference>
<dbReference type="iPTMnet" id="Q8WWL7"/>
<dbReference type="PhosphoSitePlus" id="Q8WWL7"/>
<dbReference type="BioMuta" id="CCNB3"/>
<dbReference type="DMDM" id="209572596"/>
<dbReference type="jPOST" id="Q8WWL7"/>
<dbReference type="MassIVE" id="Q8WWL7"/>
<dbReference type="PaxDb" id="9606-ENSP00000365210"/>
<dbReference type="PeptideAtlas" id="Q8WWL7"/>
<dbReference type="ProteomicsDB" id="74902">
    <molecule id="Q8WWL7-1"/>
</dbReference>
<dbReference type="Antibodypedia" id="421">
    <property type="antibodies" value="312 antibodies from 28 providers"/>
</dbReference>
<dbReference type="DNASU" id="85417"/>
<dbReference type="Ensembl" id="ENST00000276014.11">
    <molecule id="Q8WWL7-1"/>
    <property type="protein sequence ID" value="ENSP00000276014.7"/>
    <property type="gene ID" value="ENSG00000147082.18"/>
</dbReference>
<dbReference type="Ensembl" id="ENST00000348603.2">
    <molecule id="Q8WWL7-2"/>
    <property type="protein sequence ID" value="ENSP00000338682.2"/>
    <property type="gene ID" value="ENSG00000147082.18"/>
</dbReference>
<dbReference type="Ensembl" id="ENST00000376038.5">
    <molecule id="Q8WWL7-2"/>
    <property type="protein sequence ID" value="ENSP00000365206.1"/>
    <property type="gene ID" value="ENSG00000147082.18"/>
</dbReference>
<dbReference type="Ensembl" id="ENST00000376042.6">
    <molecule id="Q8WWL7-1"/>
    <property type="protein sequence ID" value="ENSP00000365210.1"/>
    <property type="gene ID" value="ENSG00000147082.18"/>
</dbReference>
<dbReference type="Ensembl" id="ENST00000476167.5">
    <molecule id="Q8WWL7-3"/>
    <property type="protein sequence ID" value="ENSP00000431645.1"/>
    <property type="gene ID" value="ENSG00000147082.18"/>
</dbReference>
<dbReference type="GeneID" id="85417"/>
<dbReference type="KEGG" id="hsa:85417"/>
<dbReference type="MANE-Select" id="ENST00000376042.6">
    <property type="protein sequence ID" value="ENSP00000365210.1"/>
    <property type="RefSeq nucleotide sequence ID" value="NM_033031.3"/>
    <property type="RefSeq protein sequence ID" value="NP_149020.2"/>
</dbReference>
<dbReference type="UCSC" id="uc004dox.5">
    <molecule id="Q8WWL7-1"/>
    <property type="organism name" value="human"/>
</dbReference>
<dbReference type="AGR" id="HGNC:18709"/>
<dbReference type="CTD" id="85417"/>
<dbReference type="DisGeNET" id="85417"/>
<dbReference type="GeneCards" id="CCNB3"/>
<dbReference type="HGNC" id="HGNC:18709">
    <property type="gene designation" value="CCNB3"/>
</dbReference>
<dbReference type="HPA" id="ENSG00000147082">
    <property type="expression patterns" value="Group enriched (brain, epididymis, testis)"/>
</dbReference>
<dbReference type="MalaCards" id="CCNB3"/>
<dbReference type="MIM" id="300456">
    <property type="type" value="gene"/>
</dbReference>
<dbReference type="neXtProt" id="NX_Q8WWL7"/>
<dbReference type="OpenTargets" id="ENSG00000147082"/>
<dbReference type="PharmGKB" id="PA38653"/>
<dbReference type="VEuPathDB" id="HostDB:ENSG00000147082"/>
<dbReference type="eggNOG" id="KOG0653">
    <property type="taxonomic scope" value="Eukaryota"/>
</dbReference>
<dbReference type="GeneTree" id="ENSGT00940000160459"/>
<dbReference type="HOGENOM" id="CLU_006366_0_0_1"/>
<dbReference type="InParanoid" id="Q8WWL7"/>
<dbReference type="OMA" id="KFEEPNA"/>
<dbReference type="PAN-GO" id="Q8WWL7">
    <property type="GO annotations" value="7 GO annotations based on evolutionary models"/>
</dbReference>
<dbReference type="PhylomeDB" id="Q8WWL7"/>
<dbReference type="TreeFam" id="TF101001"/>
<dbReference type="PathwayCommons" id="Q8WWL7"/>
<dbReference type="SignaLink" id="Q8WWL7"/>
<dbReference type="BioGRID-ORCS" id="85417">
    <property type="hits" value="11 hits in 780 CRISPR screens"/>
</dbReference>
<dbReference type="ChiTaRS" id="CCNB3">
    <property type="organism name" value="human"/>
</dbReference>
<dbReference type="GenomeRNAi" id="85417"/>
<dbReference type="Pharos" id="Q8WWL7">
    <property type="development level" value="Tbio"/>
</dbReference>
<dbReference type="PRO" id="PR:Q8WWL7"/>
<dbReference type="Proteomes" id="UP000005640">
    <property type="component" value="Chromosome X"/>
</dbReference>
<dbReference type="RNAct" id="Q8WWL7">
    <property type="molecule type" value="protein"/>
</dbReference>
<dbReference type="Bgee" id="ENSG00000147082">
    <property type="expression patterns" value="Expressed in primordial germ cell in gonad and 100 other cell types or tissues"/>
</dbReference>
<dbReference type="GO" id="GO:0000307">
    <property type="term" value="C:cyclin-dependent protein kinase holoenzyme complex"/>
    <property type="evidence" value="ECO:0000318"/>
    <property type="project" value="GO_Central"/>
</dbReference>
<dbReference type="GO" id="GO:0005737">
    <property type="term" value="C:cytoplasm"/>
    <property type="evidence" value="ECO:0000318"/>
    <property type="project" value="GO_Central"/>
</dbReference>
<dbReference type="GO" id="GO:0005654">
    <property type="term" value="C:nucleoplasm"/>
    <property type="evidence" value="ECO:0000314"/>
    <property type="project" value="HPA"/>
</dbReference>
<dbReference type="GO" id="GO:0005634">
    <property type="term" value="C:nucleus"/>
    <property type="evidence" value="ECO:0000318"/>
    <property type="project" value="GO_Central"/>
</dbReference>
<dbReference type="GO" id="GO:0016538">
    <property type="term" value="F:cyclin-dependent protein serine/threonine kinase regulator activity"/>
    <property type="evidence" value="ECO:0000318"/>
    <property type="project" value="GO_Central"/>
</dbReference>
<dbReference type="GO" id="GO:0051301">
    <property type="term" value="P:cell division"/>
    <property type="evidence" value="ECO:0007669"/>
    <property type="project" value="UniProtKB-KW"/>
</dbReference>
<dbReference type="GO" id="GO:0000082">
    <property type="term" value="P:G1/S transition of mitotic cell cycle"/>
    <property type="evidence" value="ECO:0000318"/>
    <property type="project" value="GO_Central"/>
</dbReference>
<dbReference type="GO" id="GO:0051321">
    <property type="term" value="P:meiotic cell cycle"/>
    <property type="evidence" value="ECO:0007669"/>
    <property type="project" value="UniProtKB-KW"/>
</dbReference>
<dbReference type="CDD" id="cd20508">
    <property type="entry name" value="CYCLIN_CCNB3_rpt1"/>
    <property type="match status" value="1"/>
</dbReference>
<dbReference type="FunFam" id="1.10.472.10:FF:000001">
    <property type="entry name" value="G2/mitotic-specific cyclin"/>
    <property type="match status" value="1"/>
</dbReference>
<dbReference type="Gene3D" id="1.10.472.10">
    <property type="entry name" value="Cyclin-like"/>
    <property type="match status" value="2"/>
</dbReference>
<dbReference type="InterPro" id="IPR039361">
    <property type="entry name" value="Cyclin"/>
</dbReference>
<dbReference type="InterPro" id="IPR013763">
    <property type="entry name" value="Cyclin-like_dom"/>
</dbReference>
<dbReference type="InterPro" id="IPR036915">
    <property type="entry name" value="Cyclin-like_sf"/>
</dbReference>
<dbReference type="InterPro" id="IPR004367">
    <property type="entry name" value="Cyclin_C-dom"/>
</dbReference>
<dbReference type="InterPro" id="IPR006671">
    <property type="entry name" value="Cyclin_N"/>
</dbReference>
<dbReference type="PANTHER" id="PTHR10177">
    <property type="entry name" value="CYCLINS"/>
    <property type="match status" value="1"/>
</dbReference>
<dbReference type="Pfam" id="PF02984">
    <property type="entry name" value="Cyclin_C"/>
    <property type="match status" value="1"/>
</dbReference>
<dbReference type="Pfam" id="PF00134">
    <property type="entry name" value="Cyclin_N"/>
    <property type="match status" value="1"/>
</dbReference>
<dbReference type="SMART" id="SM00385">
    <property type="entry name" value="CYCLIN"/>
    <property type="match status" value="2"/>
</dbReference>
<dbReference type="SMART" id="SM01332">
    <property type="entry name" value="Cyclin_C"/>
    <property type="match status" value="1"/>
</dbReference>
<dbReference type="SUPFAM" id="SSF47954">
    <property type="entry name" value="Cyclin-like"/>
    <property type="match status" value="2"/>
</dbReference>
<name>CCNB3_HUMAN</name>
<organism>
    <name type="scientific">Homo sapiens</name>
    <name type="common">Human</name>
    <dbReference type="NCBI Taxonomy" id="9606"/>
    <lineage>
        <taxon>Eukaryota</taxon>
        <taxon>Metazoa</taxon>
        <taxon>Chordata</taxon>
        <taxon>Craniata</taxon>
        <taxon>Vertebrata</taxon>
        <taxon>Euteleostomi</taxon>
        <taxon>Mammalia</taxon>
        <taxon>Eutheria</taxon>
        <taxon>Euarchontoglires</taxon>
        <taxon>Primates</taxon>
        <taxon>Haplorrhini</taxon>
        <taxon>Catarrhini</taxon>
        <taxon>Hominidae</taxon>
        <taxon>Homo</taxon>
    </lineage>
</organism>
<reference key="1">
    <citation type="journal article" date="2002" name="J. Biol. Chem.">
        <title>Characterization and expression of mammalian cyclin b3, a prepachytene meiotic cyclin.</title>
        <authorList>
            <person name="Nguyen T.B."/>
            <person name="Manova K."/>
            <person name="Capodieci P."/>
            <person name="Lindon C."/>
            <person name="Bottega S."/>
            <person name="Wang X.-Y."/>
            <person name="Refik-Rogers J."/>
            <person name="Pines J."/>
            <person name="Wolgemuth D.J."/>
            <person name="Koff A."/>
        </authorList>
    </citation>
    <scope>NUCLEOTIDE SEQUENCE [MRNA] (ISOFORM 1)</scope>
    <scope>FUNCTION</scope>
    <scope>SUBCELLULAR LOCATION</scope>
    <scope>DOMAIN</scope>
    <scope>TISSUE SPECIFICITY</scope>
    <scope>MUTANT CYCB3XA</scope>
    <scope>INTERACTION WITH CDK2</scope>
    <source>
        <tissue>Testis</tissue>
    </source>
</reference>
<reference key="2">
    <citation type="journal article" date="2002" name="Biochem. Biophys. Res. Commun.">
        <title>Molecular cloning, gene localization, and structure of human cyclin B3.</title>
        <authorList>
            <person name="Lozano J.-C."/>
            <person name="Perret E."/>
            <person name="Schatt P."/>
            <person name="Arnould C."/>
            <person name="Peaucellier G."/>
            <person name="Picard A."/>
        </authorList>
    </citation>
    <scope>NUCLEOTIDE SEQUENCE [MRNA] (ISOFORMS 1; 2 AND 3)</scope>
    <scope>ALTERNATIVE SPLICING</scope>
    <scope>TISSUE SPECIFICITY</scope>
    <source>
        <tissue>Placenta</tissue>
    </source>
</reference>
<reference key="3">
    <citation type="journal article" date="2005" name="Nature">
        <title>The DNA sequence of the human X chromosome.</title>
        <authorList>
            <person name="Ross M.T."/>
            <person name="Grafham D.V."/>
            <person name="Coffey A.J."/>
            <person name="Scherer S."/>
            <person name="McLay K."/>
            <person name="Muzny D."/>
            <person name="Platzer M."/>
            <person name="Howell G.R."/>
            <person name="Burrows C."/>
            <person name="Bird C.P."/>
            <person name="Frankish A."/>
            <person name="Lovell F.L."/>
            <person name="Howe K.L."/>
            <person name="Ashurst J.L."/>
            <person name="Fulton R.S."/>
            <person name="Sudbrak R."/>
            <person name="Wen G."/>
            <person name="Jones M.C."/>
            <person name="Hurles M.E."/>
            <person name="Andrews T.D."/>
            <person name="Scott C.E."/>
            <person name="Searle S."/>
            <person name="Ramser J."/>
            <person name="Whittaker A."/>
            <person name="Deadman R."/>
            <person name="Carter N.P."/>
            <person name="Hunt S.E."/>
            <person name="Chen R."/>
            <person name="Cree A."/>
            <person name="Gunaratne P."/>
            <person name="Havlak P."/>
            <person name="Hodgson A."/>
            <person name="Metzker M.L."/>
            <person name="Richards S."/>
            <person name="Scott G."/>
            <person name="Steffen D."/>
            <person name="Sodergren E."/>
            <person name="Wheeler D.A."/>
            <person name="Worley K.C."/>
            <person name="Ainscough R."/>
            <person name="Ambrose K.D."/>
            <person name="Ansari-Lari M.A."/>
            <person name="Aradhya S."/>
            <person name="Ashwell R.I."/>
            <person name="Babbage A.K."/>
            <person name="Bagguley C.L."/>
            <person name="Ballabio A."/>
            <person name="Banerjee R."/>
            <person name="Barker G.E."/>
            <person name="Barlow K.F."/>
            <person name="Barrett I.P."/>
            <person name="Bates K.N."/>
            <person name="Beare D.M."/>
            <person name="Beasley H."/>
            <person name="Beasley O."/>
            <person name="Beck A."/>
            <person name="Bethel G."/>
            <person name="Blechschmidt K."/>
            <person name="Brady N."/>
            <person name="Bray-Allen S."/>
            <person name="Bridgeman A.M."/>
            <person name="Brown A.J."/>
            <person name="Brown M.J."/>
            <person name="Bonnin D."/>
            <person name="Bruford E.A."/>
            <person name="Buhay C."/>
            <person name="Burch P."/>
            <person name="Burford D."/>
            <person name="Burgess J."/>
            <person name="Burrill W."/>
            <person name="Burton J."/>
            <person name="Bye J.M."/>
            <person name="Carder C."/>
            <person name="Carrel L."/>
            <person name="Chako J."/>
            <person name="Chapman J.C."/>
            <person name="Chavez D."/>
            <person name="Chen E."/>
            <person name="Chen G."/>
            <person name="Chen Y."/>
            <person name="Chen Z."/>
            <person name="Chinault C."/>
            <person name="Ciccodicola A."/>
            <person name="Clark S.Y."/>
            <person name="Clarke G."/>
            <person name="Clee C.M."/>
            <person name="Clegg S."/>
            <person name="Clerc-Blankenburg K."/>
            <person name="Clifford K."/>
            <person name="Cobley V."/>
            <person name="Cole C.G."/>
            <person name="Conquer J.S."/>
            <person name="Corby N."/>
            <person name="Connor R.E."/>
            <person name="David R."/>
            <person name="Davies J."/>
            <person name="Davis C."/>
            <person name="Davis J."/>
            <person name="Delgado O."/>
            <person name="Deshazo D."/>
            <person name="Dhami P."/>
            <person name="Ding Y."/>
            <person name="Dinh H."/>
            <person name="Dodsworth S."/>
            <person name="Draper H."/>
            <person name="Dugan-Rocha S."/>
            <person name="Dunham A."/>
            <person name="Dunn M."/>
            <person name="Durbin K.J."/>
            <person name="Dutta I."/>
            <person name="Eades T."/>
            <person name="Ellwood M."/>
            <person name="Emery-Cohen A."/>
            <person name="Errington H."/>
            <person name="Evans K.L."/>
            <person name="Faulkner L."/>
            <person name="Francis F."/>
            <person name="Frankland J."/>
            <person name="Fraser A.E."/>
            <person name="Galgoczy P."/>
            <person name="Gilbert J."/>
            <person name="Gill R."/>
            <person name="Gloeckner G."/>
            <person name="Gregory S.G."/>
            <person name="Gribble S."/>
            <person name="Griffiths C."/>
            <person name="Grocock R."/>
            <person name="Gu Y."/>
            <person name="Gwilliam R."/>
            <person name="Hamilton C."/>
            <person name="Hart E.A."/>
            <person name="Hawes A."/>
            <person name="Heath P.D."/>
            <person name="Heitmann K."/>
            <person name="Hennig S."/>
            <person name="Hernandez J."/>
            <person name="Hinzmann B."/>
            <person name="Ho S."/>
            <person name="Hoffs M."/>
            <person name="Howden P.J."/>
            <person name="Huckle E.J."/>
            <person name="Hume J."/>
            <person name="Hunt P.J."/>
            <person name="Hunt A.R."/>
            <person name="Isherwood J."/>
            <person name="Jacob L."/>
            <person name="Johnson D."/>
            <person name="Jones S."/>
            <person name="de Jong P.J."/>
            <person name="Joseph S.S."/>
            <person name="Keenan S."/>
            <person name="Kelly S."/>
            <person name="Kershaw J.K."/>
            <person name="Khan Z."/>
            <person name="Kioschis P."/>
            <person name="Klages S."/>
            <person name="Knights A.J."/>
            <person name="Kosiura A."/>
            <person name="Kovar-Smith C."/>
            <person name="Laird G.K."/>
            <person name="Langford C."/>
            <person name="Lawlor S."/>
            <person name="Leversha M."/>
            <person name="Lewis L."/>
            <person name="Liu W."/>
            <person name="Lloyd C."/>
            <person name="Lloyd D.M."/>
            <person name="Loulseged H."/>
            <person name="Loveland J.E."/>
            <person name="Lovell J.D."/>
            <person name="Lozado R."/>
            <person name="Lu J."/>
            <person name="Lyne R."/>
            <person name="Ma J."/>
            <person name="Maheshwari M."/>
            <person name="Matthews L.H."/>
            <person name="McDowall J."/>
            <person name="McLaren S."/>
            <person name="McMurray A."/>
            <person name="Meidl P."/>
            <person name="Meitinger T."/>
            <person name="Milne S."/>
            <person name="Miner G."/>
            <person name="Mistry S.L."/>
            <person name="Morgan M."/>
            <person name="Morris S."/>
            <person name="Mueller I."/>
            <person name="Mullikin J.C."/>
            <person name="Nguyen N."/>
            <person name="Nordsiek G."/>
            <person name="Nyakatura G."/>
            <person name="O'dell C.N."/>
            <person name="Okwuonu G."/>
            <person name="Palmer S."/>
            <person name="Pandian R."/>
            <person name="Parker D."/>
            <person name="Parrish J."/>
            <person name="Pasternak S."/>
            <person name="Patel D."/>
            <person name="Pearce A.V."/>
            <person name="Pearson D.M."/>
            <person name="Pelan S.E."/>
            <person name="Perez L."/>
            <person name="Porter K.M."/>
            <person name="Ramsey Y."/>
            <person name="Reichwald K."/>
            <person name="Rhodes S."/>
            <person name="Ridler K.A."/>
            <person name="Schlessinger D."/>
            <person name="Schueler M.G."/>
            <person name="Sehra H.K."/>
            <person name="Shaw-Smith C."/>
            <person name="Shen H."/>
            <person name="Sheridan E.M."/>
            <person name="Shownkeen R."/>
            <person name="Skuce C.D."/>
            <person name="Smith M.L."/>
            <person name="Sotheran E.C."/>
            <person name="Steingruber H.E."/>
            <person name="Steward C.A."/>
            <person name="Storey R."/>
            <person name="Swann R.M."/>
            <person name="Swarbreck D."/>
            <person name="Tabor P.E."/>
            <person name="Taudien S."/>
            <person name="Taylor T."/>
            <person name="Teague B."/>
            <person name="Thomas K."/>
            <person name="Thorpe A."/>
            <person name="Timms K."/>
            <person name="Tracey A."/>
            <person name="Trevanion S."/>
            <person name="Tromans A.C."/>
            <person name="d'Urso M."/>
            <person name="Verduzco D."/>
            <person name="Villasana D."/>
            <person name="Waldron L."/>
            <person name="Wall M."/>
            <person name="Wang Q."/>
            <person name="Warren J."/>
            <person name="Warry G.L."/>
            <person name="Wei X."/>
            <person name="West A."/>
            <person name="Whitehead S.L."/>
            <person name="Whiteley M.N."/>
            <person name="Wilkinson J.E."/>
            <person name="Willey D.L."/>
            <person name="Williams G."/>
            <person name="Williams L."/>
            <person name="Williamson A."/>
            <person name="Williamson H."/>
            <person name="Wilming L."/>
            <person name="Woodmansey R.L."/>
            <person name="Wray P.W."/>
            <person name="Yen J."/>
            <person name="Zhang J."/>
            <person name="Zhou J."/>
            <person name="Zoghbi H."/>
            <person name="Zorilla S."/>
            <person name="Buck D."/>
            <person name="Reinhardt R."/>
            <person name="Poustka A."/>
            <person name="Rosenthal A."/>
            <person name="Lehrach H."/>
            <person name="Meindl A."/>
            <person name="Minx P.J."/>
            <person name="Hillier L.W."/>
            <person name="Willard H.F."/>
            <person name="Wilson R.K."/>
            <person name="Waterston R.H."/>
            <person name="Rice C.M."/>
            <person name="Vaudin M."/>
            <person name="Coulson A."/>
            <person name="Nelson D.L."/>
            <person name="Weinstock G."/>
            <person name="Sulston J.E."/>
            <person name="Durbin R.M."/>
            <person name="Hubbard T."/>
            <person name="Gibbs R.A."/>
            <person name="Beck S."/>
            <person name="Rogers J."/>
            <person name="Bentley D.R."/>
        </authorList>
    </citation>
    <scope>NUCLEOTIDE SEQUENCE [LARGE SCALE GENOMIC DNA]</scope>
</reference>
<reference key="4">
    <citation type="submission" date="2005-09" db="EMBL/GenBank/DDBJ databases">
        <authorList>
            <person name="Mural R.J."/>
            <person name="Istrail S."/>
            <person name="Sutton G.G."/>
            <person name="Florea L."/>
            <person name="Halpern A.L."/>
            <person name="Mobarry C.M."/>
            <person name="Lippert R."/>
            <person name="Walenz B."/>
            <person name="Shatkay H."/>
            <person name="Dew I."/>
            <person name="Miller J.R."/>
            <person name="Flanigan M.J."/>
            <person name="Edwards N.J."/>
            <person name="Bolanos R."/>
            <person name="Fasulo D."/>
            <person name="Halldorsson B.V."/>
            <person name="Hannenhalli S."/>
            <person name="Turner R."/>
            <person name="Yooseph S."/>
            <person name="Lu F."/>
            <person name="Nusskern D.R."/>
            <person name="Shue B.C."/>
            <person name="Zheng X.H."/>
            <person name="Zhong F."/>
            <person name="Delcher A.L."/>
            <person name="Huson D.H."/>
            <person name="Kravitz S.A."/>
            <person name="Mouchard L."/>
            <person name="Reinert K."/>
            <person name="Remington K.A."/>
            <person name="Clark A.G."/>
            <person name="Waterman M.S."/>
            <person name="Eichler E.E."/>
            <person name="Adams M.D."/>
            <person name="Hunkapiller M.W."/>
            <person name="Myers E.W."/>
            <person name="Venter J.C."/>
        </authorList>
    </citation>
    <scope>NUCLEOTIDE SEQUENCE [LARGE SCALE GENOMIC DNA]</scope>
</reference>
<reference key="5">
    <citation type="journal article" date="2007" name="BMC Genomics">
        <title>The full-ORF clone resource of the German cDNA consortium.</title>
        <authorList>
            <person name="Bechtel S."/>
            <person name="Rosenfelder H."/>
            <person name="Duda A."/>
            <person name="Schmidt C.P."/>
            <person name="Ernst U."/>
            <person name="Wellenreuther R."/>
            <person name="Mehrle A."/>
            <person name="Schuster C."/>
            <person name="Bahr A."/>
            <person name="Bloecker H."/>
            <person name="Heubner D."/>
            <person name="Hoerlein A."/>
            <person name="Michel G."/>
            <person name="Wedler H."/>
            <person name="Koehrer K."/>
            <person name="Ottenwaelder B."/>
            <person name="Poustka A."/>
            <person name="Wiemann S."/>
            <person name="Schupp I."/>
        </authorList>
    </citation>
    <scope>NUCLEOTIDE SEQUENCE [LARGE SCALE MRNA] OF 1249-1395 (ISOFORM 1)</scope>
    <source>
        <tissue>Testis</tissue>
    </source>
</reference>
<reference key="6">
    <citation type="journal article" date="2009" name="Anal. Chem.">
        <title>Lys-N and trypsin cover complementary parts of the phosphoproteome in a refined SCX-based approach.</title>
        <authorList>
            <person name="Gauci S."/>
            <person name="Helbig A.O."/>
            <person name="Slijper M."/>
            <person name="Krijgsveld J."/>
            <person name="Heck A.J."/>
            <person name="Mohammed S."/>
        </authorList>
    </citation>
    <scope>IDENTIFICATION BY MASS SPECTROMETRY [LARGE SCALE ANALYSIS]</scope>
</reference>
<reference key="7">
    <citation type="journal article" date="2006" name="Science">
        <title>The consensus coding sequences of human breast and colorectal cancers.</title>
        <authorList>
            <person name="Sjoeblom T."/>
            <person name="Jones S."/>
            <person name="Wood L.D."/>
            <person name="Parsons D.W."/>
            <person name="Lin J."/>
            <person name="Barber T.D."/>
            <person name="Mandelker D."/>
            <person name="Leary R.J."/>
            <person name="Ptak J."/>
            <person name="Silliman N."/>
            <person name="Szabo S."/>
            <person name="Buckhaults P."/>
            <person name="Farrell C."/>
            <person name="Meeh P."/>
            <person name="Markowitz S.D."/>
            <person name="Willis J."/>
            <person name="Dawson D."/>
            <person name="Willson J.K.V."/>
            <person name="Gazdar A.F."/>
            <person name="Hartigan J."/>
            <person name="Wu L."/>
            <person name="Liu C."/>
            <person name="Parmigiani G."/>
            <person name="Park B.H."/>
            <person name="Bachman K.E."/>
            <person name="Papadopoulos N."/>
            <person name="Vogelstein B."/>
            <person name="Kinzler K.W."/>
            <person name="Velculescu V.E."/>
        </authorList>
    </citation>
    <scope>VARIANT [LARGE SCALE ANALYSIS] THR-597</scope>
</reference>
<proteinExistence type="evidence at protein level"/>
<comment type="function">
    <text evidence="4">Cyclins are positive regulatory subunits of the cyclin-dependent kinases (CDKs), and thereby play an essential role in the control of the cell cycle, notably via their destruction during cell division. Its tissue specificity suggest that it may be required during early meiotic prophase I.</text>
</comment>
<comment type="subunit">
    <text evidence="4">Interacts with CDK2 kinase.</text>
</comment>
<comment type="interaction">
    <interactant intactId="EBI-767764">
        <id>Q8WWL7</id>
    </interactant>
    <interactant intactId="EBI-767796">
        <id>A8UKE6</id>
        <label>CDK2</label>
    </interactant>
    <organismsDiffer>true</organismsDiffer>
    <experiments>2</experiments>
</comment>
<comment type="interaction">
    <interactant intactId="EBI-767764">
        <id>Q8WWL7</id>
    </interactant>
    <interactant intactId="EBI-2552433">
        <id>Q64702</id>
        <label>Plk4</label>
    </interactant>
    <organismsDiffer>true</organismsDiffer>
    <experiments>4</experiments>
</comment>
<comment type="subcellular location">
    <subcellularLocation>
        <location evidence="4">Nucleus</location>
    </subcellularLocation>
</comment>
<comment type="alternative products">
    <event type="alternative splicing"/>
    <isoform>
        <id>Q8WWL7-1</id>
        <name>1</name>
        <sequence type="displayed"/>
    </isoform>
    <isoform>
        <id>Q8WWL7-2</id>
        <name>2</name>
        <name>Variant 1</name>
        <sequence type="described" ref="VSP_010514"/>
    </isoform>
    <isoform>
        <id>Q8WWL7-3</id>
        <name>3</name>
        <name>Variant 2</name>
        <sequence type="described" ref="VSP_010515"/>
    </isoform>
</comment>
<comment type="tissue specificity">
    <text evidence="3 4">Testis specific. In testis, it is expressed in developing germ cells, but not in Leydig cells. Weakly or not expressed in other tissues.</text>
</comment>
<comment type="domain">
    <text evidence="1">The N-terminal destruction box (D-box) probably acts as a recognition signal for degradation via the ubiquitin-proteasome pathway.</text>
</comment>
<comment type="PTM">
    <text evidence="7">Ubiquitinated (Probable). Ubiquitination leads to its degradation during anaphase entry, after degradation of CCNB1.</text>
</comment>
<comment type="similarity">
    <text evidence="7">Belongs to the cyclin family. Cyclin AB subfamily.</text>
</comment>
<evidence type="ECO:0000250" key="1"/>
<evidence type="ECO:0000256" key="2">
    <source>
        <dbReference type="SAM" id="MobiDB-lite"/>
    </source>
</evidence>
<evidence type="ECO:0000269" key="3">
    <source>
    </source>
</evidence>
<evidence type="ECO:0000269" key="4">
    <source>
    </source>
</evidence>
<evidence type="ECO:0000269" key="5">
    <source>
    </source>
</evidence>
<evidence type="ECO:0000303" key="6">
    <source>
    </source>
</evidence>
<evidence type="ECO:0000305" key="7"/>
<gene>
    <name type="primary">CCNB3</name>
    <name type="synonym">CYCB3</name>
</gene>
<sequence length="1395" mass="157916">MLLPLPPQSSKPVPKKSQSSKIVPSHHDPSEKTGENCQTKISPSSLQESPSSLQGALKKRSAFEDLTNASQCQPVQPKKEANKEFVKVVSKKINRNTHALGLAKKNKRNLKWHKLEVTPVVASTTVVPNIMEKPLILDISTTSKTPNTEEASLFRKPLVLKEEPTIEDETLINKSLSLKKCSNHEEVSLLEKLQPLQEESDSDDAFVIEPMTFKKTHKTEEAAITKKTLSLKKKMCASQRKQSCQEESLAVQDVNMEEDSFFMESMSFKKKPKTEESIPTHKLSSLKKKCTIYGKICHFRKPPVLQTTICGAMSSIKKPTTEKETLFQELSVLQEKHTTEHEMSILKKSLALQKTNFKEDSLVKESLAFKKKPSTEEAIMMPVILKEQCMTEGKRSRLKPLVLQEITSGEKSLIMKPLSIKEKPSTEKESFSQEPSALQKKHTTQEEVSILKEPSSLLKSPTEESPFDEALAFTKKCTIEEAPPTKKPLILKRKHATQGTMSHLKKPLILQTTSGEKSLIKEPLPFKEEKVSLKKKCTTQEMMSICPELLDFQDMIGEDKNSFFMEPMSFRKNPTTEETVLTKTSLSLQEKKITQGKMSHLKKPLVLQKITSEEESFYKKLLPFKMKSTTEEKFLSQEPSALKEKHTTLQEVSLSKESLAIQEKATTEEEFSQELFSLHVKHTNKSGSLFQEALVLQEKTDAEEDSLKNLLALQEKSTMEEESLINKLLALKEELSAEAATNIQTQLSLKKKSTSHGKVFFLKKQLALNETINEEEFLNKQPLALEGYPSIAEGETLFKKLLAMQEEPSIEKEAVLKEPTIDTEAHFKEPLALQEEPSTEKEAVLKEPSVDTEAHFKETLALQEKPSIEQEALFKRHSALWEKPSTEKETIFKESLDLQEKPSIKKETLLKKPLALKMSTINEAVLFEDMIALNEKPTTGKELSFKEPLALQESPTYKEDTFLKTLLVPQVGTSPNVSSTAPESITSKSSIATMTSVGKSGTINEAFLFEDMITLNEKPTTGKELSFKEPLALQESPTCKEDTFLETFLIPQIGTSPYVFSTTPESITEKSSIATMTSVGKSRTTTESSACESASDKPVSPQAKGTPKEITPREDIDEDSSDPSFNPMYAKEIFSYMKEREEQFILTDYMNRQIEITSDMRAILVDWLVEVQVSFEMTHETLYLAVKLVDLYLMKAVCKKDKLQLLGATAFMIAAKFEEHNSPRVDDFVYICDDNYQRSEVLSMEINILNVLKCDINIPIAYHFLRRYARCIHTNMKTLTLSRYICEMTLQEYHYVQEKASKLAAASLLLALYMKKLGYWVPFLEHYSGYSISELHPLVRQLNKLLTFSSYDSLKAVYYKYSHPVFFEVAKIPALDMLKLEEILNCDCEAQGLVL</sequence>
<protein>
    <recommendedName>
        <fullName>G2/mitotic-specific cyclin-B3</fullName>
    </recommendedName>
</protein>
<keyword id="KW-0025">Alternative splicing</keyword>
<keyword id="KW-0131">Cell cycle</keyword>
<keyword id="KW-0132">Cell division</keyword>
<keyword id="KW-0195">Cyclin</keyword>
<keyword id="KW-0469">Meiosis</keyword>
<keyword id="KW-0539">Nucleus</keyword>
<keyword id="KW-1267">Proteomics identification</keyword>
<keyword id="KW-1185">Reference proteome</keyword>
<keyword id="KW-0832">Ubl conjugation</keyword>